<organism evidence="10">
    <name type="scientific">Mus musculus</name>
    <name type="common">Mouse</name>
    <dbReference type="NCBI Taxonomy" id="10090"/>
    <lineage>
        <taxon>Eukaryota</taxon>
        <taxon>Metazoa</taxon>
        <taxon>Chordata</taxon>
        <taxon>Craniata</taxon>
        <taxon>Vertebrata</taxon>
        <taxon>Euteleostomi</taxon>
        <taxon>Mammalia</taxon>
        <taxon>Eutheria</taxon>
        <taxon>Euarchontoglires</taxon>
        <taxon>Glires</taxon>
        <taxon>Rodentia</taxon>
        <taxon>Myomorpha</taxon>
        <taxon>Muroidea</taxon>
        <taxon>Muridae</taxon>
        <taxon>Murinae</taxon>
        <taxon>Mus</taxon>
        <taxon>Mus</taxon>
    </lineage>
</organism>
<gene>
    <name evidence="9" type="primary">Abca17</name>
</gene>
<protein>
    <recommendedName>
        <fullName evidence="9">ATP-binding cassette sub-family A member 17</fullName>
    </recommendedName>
</protein>
<evidence type="ECO:0000255" key="1"/>
<evidence type="ECO:0000255" key="2">
    <source>
        <dbReference type="PROSITE-ProRule" id="PRU00434"/>
    </source>
</evidence>
<evidence type="ECO:0000256" key="3">
    <source>
        <dbReference type="SAM" id="MobiDB-lite"/>
    </source>
</evidence>
<evidence type="ECO:0000269" key="4">
    <source>
    </source>
</evidence>
<evidence type="ECO:0000269" key="5">
    <source>
    </source>
</evidence>
<evidence type="ECO:0000305" key="6"/>
<evidence type="ECO:0000305" key="7">
    <source>
    </source>
</evidence>
<evidence type="ECO:0000312" key="8">
    <source>
        <dbReference type="EMBL" id="BAD97416.1"/>
    </source>
</evidence>
<evidence type="ECO:0000312" key="9">
    <source>
        <dbReference type="MGI" id="MGI:3625331"/>
    </source>
</evidence>
<evidence type="ECO:0000312" key="10">
    <source>
        <dbReference type="Proteomes" id="UP000000589"/>
    </source>
</evidence>
<accession>E9PX95</accession>
<accession>Q4H4D7</accession>
<comment type="function">
    <text evidence="4 5">Promotes cholesterol efflux from sperm which renders sperm capable of fertilization (PubMed:22237709). Has also been shown to decrease levels of intracellular esterified neutral lipids including cholesteryl esters, fatty acid esters and triacylglycerols (PubMed:15810880).</text>
</comment>
<comment type="catalytic activity">
    <reaction evidence="7">
        <text>cholesterol(in) + ATP + H2O = cholesterol(out) + ADP + phosphate + H(+)</text>
        <dbReference type="Rhea" id="RHEA:39051"/>
        <dbReference type="ChEBI" id="CHEBI:15377"/>
        <dbReference type="ChEBI" id="CHEBI:15378"/>
        <dbReference type="ChEBI" id="CHEBI:16113"/>
        <dbReference type="ChEBI" id="CHEBI:30616"/>
        <dbReference type="ChEBI" id="CHEBI:43474"/>
        <dbReference type="ChEBI" id="CHEBI:456216"/>
    </reaction>
    <physiologicalReaction direction="left-to-right" evidence="7">
        <dbReference type="Rhea" id="RHEA:39052"/>
    </physiologicalReaction>
</comment>
<comment type="subcellular location">
    <subcellularLocation>
        <location evidence="4">Endoplasmic reticulum membrane</location>
        <topology evidence="1">Multi-pass membrane protein</topology>
    </subcellularLocation>
    <subcellularLocation>
        <location evidence="5">Cytoplasm</location>
    </subcellularLocation>
</comment>
<comment type="tissue specificity">
    <text evidence="4 5">In the testis, detected predominantly in elongated spermatids at the late stage of germ cell development and in sperm, with no expression detected in immature germ cells such as spermatogonia and spermatocytes or in somatic cells such as Sertoli cells (at protein level) (PubMed:15810880). Expressed in the head and tail midpiece of elongated spermatids and sperm (at protein level) (PubMed:22237709). Expressed exclusively in the testis (PubMed:15810880, PubMed:22237709).</text>
</comment>
<comment type="developmental stage">
    <text evidence="5">Detected in the testis at low levels at postnatal day 5 but increases at postnatal days 20 and 45 (at protein level).</text>
</comment>
<comment type="PTM">
    <text evidence="4">N-glycosylated.</text>
</comment>
<comment type="similarity">
    <text evidence="6">Belongs to the ABC transporter superfamily. ABCA family.</text>
</comment>
<keyword id="KW-0067">ATP-binding</keyword>
<keyword id="KW-0963">Cytoplasm</keyword>
<keyword id="KW-0256">Endoplasmic reticulum</keyword>
<keyword id="KW-0325">Glycoprotein</keyword>
<keyword id="KW-0443">Lipid metabolism</keyword>
<keyword id="KW-0445">Lipid transport</keyword>
<keyword id="KW-0472">Membrane</keyword>
<keyword id="KW-0547">Nucleotide-binding</keyword>
<keyword id="KW-1185">Reference proteome</keyword>
<keyword id="KW-0677">Repeat</keyword>
<keyword id="KW-0812">Transmembrane</keyword>
<keyword id="KW-1133">Transmembrane helix</keyword>
<keyword id="KW-0813">Transport</keyword>
<sequence length="1733" mass="196020">MEVLKKLKLLLWKNFILKRRKTLITLLEMLMPLLFCAIVLYLRLNSMPRKKSSTNYPAVDVSLLPVYFYNYPLKSKFQLAYIPSKSETLKAVTEVVEQTFAVDFEVLGFPSVPLFEDYIIKDPKSFYILVGIIFHHDFNSSNEPLPLVVKYDLRFSYVQRNFVSPPRHLFFQEEIEGWCTAFLYPPNLSQAPREFSYADGGNPGYNKEGFLAIQHAVDKAIMRHHAPKAALNMFKDLHVLVQRFPFGPHIQDPFLVILQNEFPLLLMLSFICVELIITNSVLSEKERKQKEYMSMMGVESWLHWVAWFITFFISVSITVSVMTVLFCTKINRVAVFRNSNPTLIFIFLMCFAIATIFFAFMMSTFFQRAHVGTVIGGTVFFFTYLPYMYITFSYHQRTYTQKILSCLFSNVAMATGVRFISLFEAEGTGIQWRNIGSVWGDFSFAQVLGMLLLDSFLYCLIAFLVESLFPRKFGIPKSWYIFAKKPVPEIPPLLNIGDPEKPSKGNFMQDEPTNQMNTIEIQHLYKVFYSGRSKRTAIRDLSMNLYKGQVTVLLGHNGAGKTTVCSVLTGLITPSKGHAYIHGCEISKDMVQIRKSLGWCPQHDILFDNFTVTDHLYFYGQLKGLSPQDCHEQTQEMLHLLGLKDKWNSRSKFLSGGMKRKLSIGIALIAGSKVLILDEPTSGLDSPSRRAIWDLLQQQKGDRTVLLTTHFMDEADLLGDRIAILAKGELQCCGSPSFLKQKYGAGYYMTIIKTPLCDTSKLSEVIYHHIPNAVLESNIGEEMIVTLPKKTIHRFEALFNDLELRQTELGISTFATSVTTMEEVFIRVCKLADPSTNVLTEKRHSLHPLPRHHRVPVDRIKCLHSGTFPVSTEQPMRLNTGFCLLCQQFYAMLLKKITYSRRNWMLVLSVQVLLPLAIIMLSLTFFNFKLRKLDNVPLELTLQTYGQTIVPFFIAENSHLDPQLSDDFVKMLVAAGQVPLRIQGSVEDFLLKKAKEAPEGFDKLYVVAASFEDVNNHTTVKALFNNQAYHSPSLALTLVDNLLFKLLSGANASITTTNYPQPQTAIEVSESILYQGPKGHYLVVNFLFGIAFLSSSFSILTVGEKSVKSKSLQFVSGVSTAVFWLSALLWDLISFLVPTLLLVLVFLWYKEEAFAHHESIPAVVLIMMLYGWAVIPLVYTVSFSFNTPGSACVKLVVMLTFLSISPVVLVTVTSEKDLGYTELSDSLDHIFLILPGHCLGMALSNLYYNFELKKFCSAKNLSDIDCNDVLEGYVVQENIYAWESLGIGKYLTALAVLGPVYITMLFLTEANAFYVLKSRLSGFFPSFWKEKSGMIFDVAEPEDEDVLEEAETIKRYLETLVKKNPLVVKEVSKVYKDKVPLLAVNKVSFVVKEEECFGLLGLNGAGKTSIFNMLTSEQPITSGDAFVKGFNIKSDIAKVRQWIGYCPEFDALLNFMTGREMLVMYARIRGIPECHIKACVDLILENLLMCVCADKLVKTYSGGNKRMLSTGIALVGEPAVILLDEPSTGMDPVARRLLWDTVERVRESGKTIVITSHSMEECEALCTRLAIMVQGQFKCLGSPQHLKSKFGISYSLQAKVRRKWQQQMLEEFKAFVDLTFPGSNLEDEHQNMLQYYLPGPNLSWAKVFSIMEQAKKDYMLEDYSISQLSLEDIFLNFTRPESSTKEQIQQEQAVLASPSPPSNSRPISSPPSRLSSPTPKPLPSPPPSEPILL</sequence>
<feature type="chain" id="PRO_0000436476" description="ATP-binding cassette sub-family A member 17">
    <location>
        <begin position="1"/>
        <end position="1733"/>
    </location>
</feature>
<feature type="transmembrane region" description="Helical" evidence="1">
    <location>
        <begin position="22"/>
        <end position="42"/>
    </location>
</feature>
<feature type="transmembrane region" description="Helical" evidence="1">
    <location>
        <begin position="262"/>
        <end position="282"/>
    </location>
</feature>
<feature type="transmembrane region" description="Helical" evidence="1">
    <location>
        <begin position="306"/>
        <end position="326"/>
    </location>
</feature>
<feature type="transmembrane region" description="Helical" evidence="1">
    <location>
        <begin position="342"/>
        <end position="362"/>
    </location>
</feature>
<feature type="transmembrane region" description="Helical" evidence="1">
    <location>
        <begin position="372"/>
        <end position="392"/>
    </location>
</feature>
<feature type="transmembrane region" description="Helical" evidence="1">
    <location>
        <begin position="403"/>
        <end position="423"/>
    </location>
</feature>
<feature type="transmembrane region" description="Helical" evidence="1">
    <location>
        <begin position="444"/>
        <end position="464"/>
    </location>
</feature>
<feature type="transmembrane region" description="Helical" evidence="1">
    <location>
        <begin position="906"/>
        <end position="926"/>
    </location>
</feature>
<feature type="transmembrane region" description="Helical" evidence="1">
    <location>
        <begin position="1082"/>
        <end position="1102"/>
    </location>
</feature>
<feature type="transmembrane region" description="Helical" evidence="1">
    <location>
        <begin position="1128"/>
        <end position="1148"/>
    </location>
</feature>
<feature type="transmembrane region" description="Helical" evidence="1">
    <location>
        <begin position="1160"/>
        <end position="1180"/>
    </location>
</feature>
<feature type="transmembrane region" description="Helical" evidence="1">
    <location>
        <begin position="1192"/>
        <end position="1212"/>
    </location>
</feature>
<feature type="transmembrane region" description="Helical" evidence="1">
    <location>
        <begin position="1230"/>
        <end position="1250"/>
    </location>
</feature>
<feature type="transmembrane region" description="Helical" evidence="1">
    <location>
        <begin position="1287"/>
        <end position="1307"/>
    </location>
</feature>
<feature type="domain" description="ABC transporter 1" evidence="2">
    <location>
        <begin position="519"/>
        <end position="752"/>
    </location>
</feature>
<feature type="domain" description="ABC transporter 2" evidence="2">
    <location>
        <begin position="1366"/>
        <end position="1599"/>
    </location>
</feature>
<feature type="region of interest" description="Disordered" evidence="3">
    <location>
        <begin position="1681"/>
        <end position="1733"/>
    </location>
</feature>
<feature type="compositionally biased region" description="Polar residues" evidence="3">
    <location>
        <begin position="1681"/>
        <end position="1692"/>
    </location>
</feature>
<feature type="compositionally biased region" description="Low complexity" evidence="3">
    <location>
        <begin position="1704"/>
        <end position="1717"/>
    </location>
</feature>
<feature type="compositionally biased region" description="Pro residues" evidence="3">
    <location>
        <begin position="1718"/>
        <end position="1733"/>
    </location>
</feature>
<feature type="binding site" evidence="2">
    <location>
        <begin position="555"/>
        <end position="562"/>
    </location>
    <ligand>
        <name>ATP</name>
        <dbReference type="ChEBI" id="CHEBI:30616"/>
    </ligand>
</feature>
<feature type="binding site" evidence="2">
    <location>
        <begin position="1401"/>
        <end position="1408"/>
    </location>
    <ligand>
        <name>ATP</name>
        <dbReference type="ChEBI" id="CHEBI:30616"/>
    </ligand>
</feature>
<feature type="glycosylation site" description="N-linked (GlcNAc...) asparagine" evidence="1">
    <location>
        <position position="609"/>
    </location>
</feature>
<feature type="sequence conflict" description="In Ref. 1; BAD97416." evidence="6" ref="1">
    <original>Y</original>
    <variation>C</variation>
    <location>
        <position position="67"/>
    </location>
</feature>
<feature type="sequence conflict" description="In Ref. 1; BAD97416." evidence="6" ref="1">
    <original>T</original>
    <variation>M</variation>
    <location>
        <position position="415"/>
    </location>
</feature>
<feature type="sequence conflict" description="In Ref. 1; BAD97416." evidence="6" ref="1">
    <original>K</original>
    <variation>R</variation>
    <location>
        <position position="652"/>
    </location>
</feature>
<feature type="sequence conflict" description="In Ref. 1; BAD97416." evidence="6" ref="1">
    <original>G</original>
    <variation>D</variation>
    <location>
        <position position="657"/>
    </location>
</feature>
<feature type="sequence conflict" description="In Ref. 1; BAD97416." evidence="6" ref="1">
    <original>I</original>
    <variation>L</variation>
    <location>
        <position position="1166"/>
    </location>
</feature>
<feature type="sequence conflict" description="In Ref. 1; BAD97416." evidence="6" ref="1">
    <original>AETIKR</original>
    <variation>TEAIKH</variation>
    <location>
        <begin position="1350"/>
        <end position="1355"/>
    </location>
</feature>
<feature type="sequence conflict" description="In Ref. 1; BAD97416." evidence="6" ref="1">
    <original>V</original>
    <variation>I</variation>
    <location>
        <position position="1361"/>
    </location>
</feature>
<feature type="sequence conflict" description="In Ref. 1; BAD97416." evidence="6" ref="1">
    <original>K</original>
    <variation>E</variation>
    <location>
        <position position="1378"/>
    </location>
</feature>
<feature type="sequence conflict" description="In Ref. 1; BAD97416." evidence="6" ref="1">
    <original>E</original>
    <variation>G</variation>
    <location>
        <position position="1394"/>
    </location>
</feature>
<feature type="sequence conflict" description="In Ref. 1; BAD97416." evidence="6" ref="1">
    <original>K</original>
    <variation>E</variation>
    <location>
        <position position="1578"/>
    </location>
</feature>
<feature type="sequence conflict" description="In Ref. 1; BAD97416." evidence="6" ref="1">
    <original>S</original>
    <variation>G</variation>
    <location>
        <position position="1593"/>
    </location>
</feature>
<feature type="sequence conflict" description="In Ref. 1; BAD97416." evidence="6" ref="1">
    <original>V</original>
    <variation>A</variation>
    <location>
        <position position="1694"/>
    </location>
</feature>
<name>ABCAH_MOUSE</name>
<proteinExistence type="evidence at protein level"/>
<dbReference type="EMBL" id="AB112584">
    <property type="protein sequence ID" value="BAD97416.1"/>
    <property type="molecule type" value="mRNA"/>
</dbReference>
<dbReference type="EMBL" id="AC117577">
    <property type="status" value="NOT_ANNOTATED_CDS"/>
    <property type="molecule type" value="Genomic_DNA"/>
</dbReference>
<dbReference type="CCDS" id="CCDS37485.1"/>
<dbReference type="RefSeq" id="NP_001026792.2">
    <property type="nucleotide sequence ID" value="NM_001031621.3"/>
</dbReference>
<dbReference type="RefSeq" id="XP_006524539.1">
    <property type="nucleotide sequence ID" value="XM_006524476.3"/>
</dbReference>
<dbReference type="RefSeq" id="XP_006524540.1">
    <property type="nucleotide sequence ID" value="XM_006524477.3"/>
</dbReference>
<dbReference type="RefSeq" id="XP_006524541.1">
    <property type="nucleotide sequence ID" value="XM_006524478.3"/>
</dbReference>
<dbReference type="RefSeq" id="XP_006524542.1">
    <property type="nucleotide sequence ID" value="XM_006524479.3"/>
</dbReference>
<dbReference type="RefSeq" id="XP_017173021.1">
    <property type="nucleotide sequence ID" value="XM_017317532.3"/>
</dbReference>
<dbReference type="RefSeq" id="XP_017173022.1">
    <property type="nucleotide sequence ID" value="XM_017317533.1"/>
</dbReference>
<dbReference type="SMR" id="E9PX95"/>
<dbReference type="FunCoup" id="E9PX95">
    <property type="interactions" value="549"/>
</dbReference>
<dbReference type="STRING" id="10090.ENSMUSP00000112538"/>
<dbReference type="TCDB" id="3.A.1.211.26">
    <property type="family name" value="the atp-binding cassette (abc) superfamily"/>
</dbReference>
<dbReference type="GlyCosmos" id="E9PX95">
    <property type="glycosylation" value="1 site, No reported glycans"/>
</dbReference>
<dbReference type="GlyGen" id="E9PX95">
    <property type="glycosylation" value="1 site"/>
</dbReference>
<dbReference type="PaxDb" id="10090-ENSMUSP00000112538"/>
<dbReference type="ProteomicsDB" id="296468"/>
<dbReference type="Ensembl" id="ENSMUST00000039324.7">
    <property type="protein sequence ID" value="ENSMUSP00000046218.7"/>
    <property type="gene ID" value="ENSMUSG00000035435.18"/>
</dbReference>
<dbReference type="Ensembl" id="ENSMUST00000121226.8">
    <property type="protein sequence ID" value="ENSMUSP00000112538.2"/>
    <property type="gene ID" value="ENSMUSG00000035435.18"/>
</dbReference>
<dbReference type="GeneID" id="381072"/>
<dbReference type="KEGG" id="mmu:381072"/>
<dbReference type="UCSC" id="uc008avk.1">
    <property type="organism name" value="mouse"/>
</dbReference>
<dbReference type="AGR" id="MGI:3625331"/>
<dbReference type="CTD" id="381072"/>
<dbReference type="MGI" id="MGI:3625331">
    <property type="gene designation" value="Abca17"/>
</dbReference>
<dbReference type="VEuPathDB" id="HostDB:ENSMUSG00000035435"/>
<dbReference type="eggNOG" id="KOG0059">
    <property type="taxonomic scope" value="Eukaryota"/>
</dbReference>
<dbReference type="GeneTree" id="ENSGT00940000163933"/>
<dbReference type="HOGENOM" id="CLU_000604_19_1_1"/>
<dbReference type="InParanoid" id="E9PX95"/>
<dbReference type="OMA" id="QIMGICP"/>
<dbReference type="OrthoDB" id="6512918at2759"/>
<dbReference type="PhylomeDB" id="E9PX95"/>
<dbReference type="TreeFam" id="TF105191"/>
<dbReference type="BioGRID-ORCS" id="381072">
    <property type="hits" value="4 hits in 76 CRISPR screens"/>
</dbReference>
<dbReference type="ChiTaRS" id="Abca17">
    <property type="organism name" value="mouse"/>
</dbReference>
<dbReference type="PRO" id="PR:E9PX95"/>
<dbReference type="Proteomes" id="UP000000589">
    <property type="component" value="Chromosome 17"/>
</dbReference>
<dbReference type="RNAct" id="E9PX95">
    <property type="molecule type" value="protein"/>
</dbReference>
<dbReference type="Bgee" id="ENSMUSG00000035435">
    <property type="expression patterns" value="Expressed in spermatid and 21 other cell types or tissues"/>
</dbReference>
<dbReference type="ExpressionAtlas" id="E9PX95">
    <property type="expression patterns" value="baseline and differential"/>
</dbReference>
<dbReference type="GO" id="GO:0005783">
    <property type="term" value="C:endoplasmic reticulum"/>
    <property type="evidence" value="ECO:0000314"/>
    <property type="project" value="MGI"/>
</dbReference>
<dbReference type="GO" id="GO:0005789">
    <property type="term" value="C:endoplasmic reticulum membrane"/>
    <property type="evidence" value="ECO:0007669"/>
    <property type="project" value="UniProtKB-SubCell"/>
</dbReference>
<dbReference type="GO" id="GO:0140359">
    <property type="term" value="F:ABC-type transporter activity"/>
    <property type="evidence" value="ECO:0007669"/>
    <property type="project" value="InterPro"/>
</dbReference>
<dbReference type="GO" id="GO:0005524">
    <property type="term" value="F:ATP binding"/>
    <property type="evidence" value="ECO:0007669"/>
    <property type="project" value="UniProtKB-KW"/>
</dbReference>
<dbReference type="GO" id="GO:0016887">
    <property type="term" value="F:ATP hydrolysis activity"/>
    <property type="evidence" value="ECO:0007669"/>
    <property type="project" value="InterPro"/>
</dbReference>
<dbReference type="GO" id="GO:0006869">
    <property type="term" value="P:lipid transport"/>
    <property type="evidence" value="ECO:0007669"/>
    <property type="project" value="UniProtKB-KW"/>
</dbReference>
<dbReference type="GO" id="GO:0006638">
    <property type="term" value="P:neutral lipid metabolic process"/>
    <property type="evidence" value="ECO:0000314"/>
    <property type="project" value="MGI"/>
</dbReference>
<dbReference type="CDD" id="cd03263">
    <property type="entry name" value="ABC_subfamily_A"/>
    <property type="match status" value="2"/>
</dbReference>
<dbReference type="FunFam" id="3.40.50.300:FF:000327">
    <property type="entry name" value="ATP-binding cassette sub-family A member 3"/>
    <property type="match status" value="1"/>
</dbReference>
<dbReference type="FunFam" id="3.40.50.300:FF:000465">
    <property type="entry name" value="ATP-binding cassette, sub-family A (ABC1), member 3"/>
    <property type="match status" value="1"/>
</dbReference>
<dbReference type="Gene3D" id="3.40.50.300">
    <property type="entry name" value="P-loop containing nucleotide triphosphate hydrolases"/>
    <property type="match status" value="2"/>
</dbReference>
<dbReference type="InterPro" id="IPR003593">
    <property type="entry name" value="AAA+_ATPase"/>
</dbReference>
<dbReference type="InterPro" id="IPR013525">
    <property type="entry name" value="ABC2_TM"/>
</dbReference>
<dbReference type="InterPro" id="IPR003439">
    <property type="entry name" value="ABC_transporter-like_ATP-bd"/>
</dbReference>
<dbReference type="InterPro" id="IPR017871">
    <property type="entry name" value="ABC_transporter-like_CS"/>
</dbReference>
<dbReference type="InterPro" id="IPR026082">
    <property type="entry name" value="ABCA"/>
</dbReference>
<dbReference type="InterPro" id="IPR027417">
    <property type="entry name" value="P-loop_NTPase"/>
</dbReference>
<dbReference type="InterPro" id="IPR056264">
    <property type="entry name" value="R2_ABCA1-4-like"/>
</dbReference>
<dbReference type="PANTHER" id="PTHR19229:SF117">
    <property type="entry name" value="ATP-BINDING CASSETTE SUB-FAMILY A MEMBER 17"/>
    <property type="match status" value="1"/>
</dbReference>
<dbReference type="PANTHER" id="PTHR19229">
    <property type="entry name" value="ATP-BINDING CASSETTE TRANSPORTER SUBFAMILY A ABCA"/>
    <property type="match status" value="1"/>
</dbReference>
<dbReference type="Pfam" id="PF12698">
    <property type="entry name" value="ABC2_membrane_3"/>
    <property type="match status" value="2"/>
</dbReference>
<dbReference type="Pfam" id="PF00005">
    <property type="entry name" value="ABC_tran"/>
    <property type="match status" value="2"/>
</dbReference>
<dbReference type="Pfam" id="PF23321">
    <property type="entry name" value="R1_ABCA1"/>
    <property type="match status" value="1"/>
</dbReference>
<dbReference type="SMART" id="SM00382">
    <property type="entry name" value="AAA"/>
    <property type="match status" value="2"/>
</dbReference>
<dbReference type="SUPFAM" id="SSF52540">
    <property type="entry name" value="P-loop containing nucleoside triphosphate hydrolases"/>
    <property type="match status" value="2"/>
</dbReference>
<dbReference type="PROSITE" id="PS00211">
    <property type="entry name" value="ABC_TRANSPORTER_1"/>
    <property type="match status" value="1"/>
</dbReference>
<dbReference type="PROSITE" id="PS50893">
    <property type="entry name" value="ABC_TRANSPORTER_2"/>
    <property type="match status" value="2"/>
</dbReference>
<reference evidence="8" key="1">
    <citation type="journal article" date="2005" name="Biochem. J.">
        <title>Cloning of ABCA17, a novel rodent sperm-specific ABC (ATP-binding cassette) transporter that regulates intracellular lipid metabolism.</title>
        <authorList>
            <person name="Ban N."/>
            <person name="Sasaki M."/>
            <person name="Sakai H."/>
            <person name="Ueda K."/>
            <person name="Inagaki N."/>
        </authorList>
    </citation>
    <scope>NUCLEOTIDE SEQUENCE [MRNA]</scope>
    <scope>FUNCTION</scope>
    <scope>SUBCELLULAR LOCATION</scope>
    <scope>TISSUE SPECIFICITY</scope>
    <scope>GLYCOSYLATION</scope>
    <source>
        <strain evidence="8">C57BL/6N</strain>
        <tissue evidence="8">Testis</tissue>
    </source>
</reference>
<reference evidence="10" key="2">
    <citation type="journal article" date="2009" name="PLoS Biol.">
        <title>Lineage-specific biology revealed by a finished genome assembly of the mouse.</title>
        <authorList>
            <person name="Church D.M."/>
            <person name="Goodstadt L."/>
            <person name="Hillier L.W."/>
            <person name="Zody M.C."/>
            <person name="Goldstein S."/>
            <person name="She X."/>
            <person name="Bult C.J."/>
            <person name="Agarwala R."/>
            <person name="Cherry J.L."/>
            <person name="DiCuccio M."/>
            <person name="Hlavina W."/>
            <person name="Kapustin Y."/>
            <person name="Meric P."/>
            <person name="Maglott D."/>
            <person name="Birtle Z."/>
            <person name="Marques A.C."/>
            <person name="Graves T."/>
            <person name="Zhou S."/>
            <person name="Teague B."/>
            <person name="Potamousis K."/>
            <person name="Churas C."/>
            <person name="Place M."/>
            <person name="Herschleb J."/>
            <person name="Runnheim R."/>
            <person name="Forrest D."/>
            <person name="Amos-Landgraf J."/>
            <person name="Schwartz D.C."/>
            <person name="Cheng Z."/>
            <person name="Lindblad-Toh K."/>
            <person name="Eichler E.E."/>
            <person name="Ponting C.P."/>
        </authorList>
    </citation>
    <scope>NUCLEOTIDE SEQUENCE [LARGE SCALE GENOMIC DNA]</scope>
    <source>
        <strain evidence="10">C57BL/6J</strain>
    </source>
</reference>
<reference key="3">
    <citation type="journal article" date="2010" name="Cell">
        <title>A tissue-specific atlas of mouse protein phosphorylation and expression.</title>
        <authorList>
            <person name="Huttlin E.L."/>
            <person name="Jedrychowski M.P."/>
            <person name="Elias J.E."/>
            <person name="Goswami T."/>
            <person name="Rad R."/>
            <person name="Beausoleil S.A."/>
            <person name="Villen J."/>
            <person name="Haas W."/>
            <person name="Sowa M.E."/>
            <person name="Gygi S.P."/>
        </authorList>
    </citation>
    <scope>IDENTIFICATION BY MASS SPECTROMETRY [LARGE SCALE ANALYSIS]</scope>
    <source>
        <tissue>Testis</tissue>
    </source>
</reference>
<reference key="4">
    <citation type="journal article" date="2012" name="Histol. Histopathol.">
        <title>ABCA17 mediates sterol efflux from mouse spermatozoa plasma membranes.</title>
        <authorList>
            <person name="Morales C.R."/>
            <person name="Ni X."/>
            <person name="Smith C.E."/>
            <person name="Inagaki N."/>
            <person name="Hermo L."/>
        </authorList>
    </citation>
    <scope>FUNCTION</scope>
    <scope>SUBCELLULAR LOCATION</scope>
    <scope>TISSUE SPECIFICITY</scope>
    <scope>DEVELOPMENTAL STAGE</scope>
    <scope>CATALYTIC ACTIVITY</scope>
</reference>